<dbReference type="EMBL" id="AC002311">
    <property type="protein sequence ID" value="AAC00603.1"/>
    <property type="status" value="ALT_SEQ"/>
    <property type="molecule type" value="Genomic_DNA"/>
</dbReference>
<dbReference type="EMBL" id="AC005292">
    <property type="protein sequence ID" value="AAF86997.1"/>
    <property type="status" value="ALT_SEQ"/>
    <property type="molecule type" value="Genomic_DNA"/>
</dbReference>
<dbReference type="EMBL" id="CP002684">
    <property type="protein sequence ID" value="AEE30359.1"/>
    <property type="molecule type" value="Genomic_DNA"/>
</dbReference>
<dbReference type="EMBL" id="CP002684">
    <property type="protein sequence ID" value="AEE30360.1"/>
    <property type="molecule type" value="Genomic_DNA"/>
</dbReference>
<dbReference type="PIR" id="F86366">
    <property type="entry name" value="F86366"/>
</dbReference>
<dbReference type="RefSeq" id="NP_001185071.1">
    <molecule id="F4I4P3-2"/>
    <property type="nucleotide sequence ID" value="NM_001198142.2"/>
</dbReference>
<dbReference type="RefSeq" id="NP_173737.1">
    <molecule id="F4I4P3-1"/>
    <property type="nucleotide sequence ID" value="NM_102172.2"/>
</dbReference>
<dbReference type="SMR" id="F4I4P3"/>
<dbReference type="FunCoup" id="F4I4P3">
    <property type="interactions" value="2634"/>
</dbReference>
<dbReference type="STRING" id="3702.F4I4P3"/>
<dbReference type="GlyGen" id="F4I4P3">
    <property type="glycosylation" value="1 site"/>
</dbReference>
<dbReference type="iPTMnet" id="F4I4P3"/>
<dbReference type="PaxDb" id="3702-AT1G23230.1"/>
<dbReference type="EnsemblPlants" id="AT1G23230.1">
    <molecule id="F4I4P3-1"/>
    <property type="protein sequence ID" value="AT1G23230.1"/>
    <property type="gene ID" value="AT1G23230"/>
</dbReference>
<dbReference type="EnsemblPlants" id="AT1G23230.2">
    <molecule id="F4I4P3-2"/>
    <property type="protein sequence ID" value="AT1G23230.2"/>
    <property type="gene ID" value="AT1G23230"/>
</dbReference>
<dbReference type="GeneID" id="838932"/>
<dbReference type="Gramene" id="AT1G23230.1">
    <molecule id="F4I4P3-1"/>
    <property type="protein sequence ID" value="AT1G23230.1"/>
    <property type="gene ID" value="AT1G23230"/>
</dbReference>
<dbReference type="Gramene" id="AT1G23230.2">
    <molecule id="F4I4P3-2"/>
    <property type="protein sequence ID" value="AT1G23230.2"/>
    <property type="gene ID" value="AT1G23230"/>
</dbReference>
<dbReference type="KEGG" id="ath:AT1G23230"/>
<dbReference type="Araport" id="AT1G23230"/>
<dbReference type="TAIR" id="AT1G23230">
    <property type="gene designation" value="MED23"/>
</dbReference>
<dbReference type="eggNOG" id="KOG1883">
    <property type="taxonomic scope" value="Eukaryota"/>
</dbReference>
<dbReference type="InParanoid" id="F4I4P3"/>
<dbReference type="OMA" id="RGHQIQD"/>
<dbReference type="OrthoDB" id="9982951at2759"/>
<dbReference type="PRO" id="PR:F4I4P3"/>
<dbReference type="Proteomes" id="UP000006548">
    <property type="component" value="Chromosome 1"/>
</dbReference>
<dbReference type="ExpressionAtlas" id="F4I4P3">
    <property type="expression patterns" value="baseline and differential"/>
</dbReference>
<dbReference type="GO" id="GO:0016592">
    <property type="term" value="C:mediator complex"/>
    <property type="evidence" value="ECO:0000314"/>
    <property type="project" value="UniProtKB"/>
</dbReference>
<dbReference type="InterPro" id="IPR021629">
    <property type="entry name" value="Mediator_Med23"/>
</dbReference>
<dbReference type="PANTHER" id="PTHR12691">
    <property type="entry name" value="MEDIATOR OF RNA POLYMERASE II TRANSCRIPTION SUBUNIT 23"/>
    <property type="match status" value="1"/>
</dbReference>
<dbReference type="PANTHER" id="PTHR12691:SF10">
    <property type="entry name" value="MEDIATOR OF RNA POLYMERASE II TRANSCRIPTION SUBUNIT 23"/>
    <property type="match status" value="1"/>
</dbReference>
<dbReference type="Pfam" id="PF11573">
    <property type="entry name" value="Med23"/>
    <property type="match status" value="1"/>
</dbReference>
<gene>
    <name type="primary">MED23</name>
    <name type="synonym">MED23_1</name>
    <name type="ordered locus">At1g23230</name>
    <name type="ORF">F26F24.8</name>
    <name type="ORF">T26J12.1</name>
</gene>
<feature type="chain" id="PRO_0000418123" description="Mediator of RNA polymerase II transcription subunit 23">
    <location>
        <begin position="1"/>
        <end position="1615"/>
    </location>
</feature>
<feature type="region of interest" description="Disordered" evidence="2">
    <location>
        <begin position="40"/>
        <end position="67"/>
    </location>
</feature>
<feature type="region of interest" description="Disordered" evidence="2">
    <location>
        <begin position="1230"/>
        <end position="1270"/>
    </location>
</feature>
<feature type="compositionally biased region" description="Basic and acidic residues" evidence="2">
    <location>
        <begin position="41"/>
        <end position="51"/>
    </location>
</feature>
<feature type="compositionally biased region" description="Low complexity" evidence="2">
    <location>
        <begin position="1230"/>
        <end position="1241"/>
    </location>
</feature>
<feature type="splice variant" id="VSP_043991" description="In isoform 2." evidence="4">
    <location>
        <begin position="477"/>
        <end position="495"/>
    </location>
</feature>
<feature type="splice variant" id="VSP_043992" description="In isoform 2." evidence="4">
    <original>SQLAQ</original>
    <variation>S</variation>
    <location>
        <begin position="754"/>
        <end position="758"/>
    </location>
</feature>
<evidence type="ECO:0000250" key="1"/>
<evidence type="ECO:0000256" key="2">
    <source>
        <dbReference type="SAM" id="MobiDB-lite"/>
    </source>
</evidence>
<evidence type="ECO:0000269" key="3">
    <source>
    </source>
</evidence>
<evidence type="ECO:0000305" key="4"/>
<keyword id="KW-0025">Alternative splicing</keyword>
<keyword id="KW-0539">Nucleus</keyword>
<keyword id="KW-1185">Reference proteome</keyword>
<keyword id="KW-0804">Transcription</keyword>
<keyword id="KW-0805">Transcription regulation</keyword>
<reference key="1">
    <citation type="journal article" date="2000" name="Nature">
        <title>Sequence and analysis of chromosome 1 of the plant Arabidopsis thaliana.</title>
        <authorList>
            <person name="Theologis A."/>
            <person name="Ecker J.R."/>
            <person name="Palm C.J."/>
            <person name="Federspiel N.A."/>
            <person name="Kaul S."/>
            <person name="White O."/>
            <person name="Alonso J."/>
            <person name="Altafi H."/>
            <person name="Araujo R."/>
            <person name="Bowman C.L."/>
            <person name="Brooks S.Y."/>
            <person name="Buehler E."/>
            <person name="Chan A."/>
            <person name="Chao Q."/>
            <person name="Chen H."/>
            <person name="Cheuk R.F."/>
            <person name="Chin C.W."/>
            <person name="Chung M.K."/>
            <person name="Conn L."/>
            <person name="Conway A.B."/>
            <person name="Conway A.R."/>
            <person name="Creasy T.H."/>
            <person name="Dewar K."/>
            <person name="Dunn P."/>
            <person name="Etgu P."/>
            <person name="Feldblyum T.V."/>
            <person name="Feng J.-D."/>
            <person name="Fong B."/>
            <person name="Fujii C.Y."/>
            <person name="Gill J.E."/>
            <person name="Goldsmith A.D."/>
            <person name="Haas B."/>
            <person name="Hansen N.F."/>
            <person name="Hughes B."/>
            <person name="Huizar L."/>
            <person name="Hunter J.L."/>
            <person name="Jenkins J."/>
            <person name="Johnson-Hopson C."/>
            <person name="Khan S."/>
            <person name="Khaykin E."/>
            <person name="Kim C.J."/>
            <person name="Koo H.L."/>
            <person name="Kremenetskaia I."/>
            <person name="Kurtz D.B."/>
            <person name="Kwan A."/>
            <person name="Lam B."/>
            <person name="Langin-Hooper S."/>
            <person name="Lee A."/>
            <person name="Lee J.M."/>
            <person name="Lenz C.A."/>
            <person name="Li J.H."/>
            <person name="Li Y.-P."/>
            <person name="Lin X."/>
            <person name="Liu S.X."/>
            <person name="Liu Z.A."/>
            <person name="Luros J.S."/>
            <person name="Maiti R."/>
            <person name="Marziali A."/>
            <person name="Militscher J."/>
            <person name="Miranda M."/>
            <person name="Nguyen M."/>
            <person name="Nierman W.C."/>
            <person name="Osborne B.I."/>
            <person name="Pai G."/>
            <person name="Peterson J."/>
            <person name="Pham P.K."/>
            <person name="Rizzo M."/>
            <person name="Rooney T."/>
            <person name="Rowley D."/>
            <person name="Sakano H."/>
            <person name="Salzberg S.L."/>
            <person name="Schwartz J.R."/>
            <person name="Shinn P."/>
            <person name="Southwick A.M."/>
            <person name="Sun H."/>
            <person name="Tallon L.J."/>
            <person name="Tambunga G."/>
            <person name="Toriumi M.J."/>
            <person name="Town C.D."/>
            <person name="Utterback T."/>
            <person name="Van Aken S."/>
            <person name="Vaysberg M."/>
            <person name="Vysotskaia V.S."/>
            <person name="Walker M."/>
            <person name="Wu D."/>
            <person name="Yu G."/>
            <person name="Fraser C.M."/>
            <person name="Venter J.C."/>
            <person name="Davis R.W."/>
        </authorList>
    </citation>
    <scope>NUCLEOTIDE SEQUENCE [LARGE SCALE GENOMIC DNA]</scope>
    <source>
        <strain>cv. Columbia</strain>
    </source>
</reference>
<reference key="2">
    <citation type="journal article" date="2017" name="Plant J.">
        <title>Araport11: a complete reannotation of the Arabidopsis thaliana reference genome.</title>
        <authorList>
            <person name="Cheng C.Y."/>
            <person name="Krishnakumar V."/>
            <person name="Chan A.P."/>
            <person name="Thibaud-Nissen F."/>
            <person name="Schobel S."/>
            <person name="Town C.D."/>
        </authorList>
    </citation>
    <scope>GENOME REANNOTATION</scope>
    <source>
        <strain>cv. Columbia</strain>
    </source>
</reference>
<reference key="3">
    <citation type="journal article" date="2007" name="Mol. Cell">
        <title>Purification of a plant mediator from Arabidopsis thaliana identifies PFT1 as the Med25 subunit.</title>
        <authorList>
            <person name="Baeckstroem S."/>
            <person name="Elfving N."/>
            <person name="Nilsson R."/>
            <person name="Wingsle G."/>
            <person name="Bjoerklund S."/>
        </authorList>
    </citation>
    <scope>IDENTIFICATION BY MASS SPECTROMETRY</scope>
    <scope>IDENTIFICATION IN THE MEDIATOR COMPLEX</scope>
    <scope>NOMENCLATURE</scope>
</reference>
<reference key="4">
    <citation type="journal article" date="2011" name="Plant Physiol.">
        <title>The Mediator complex in plants: structure, phylogeny, and expression profiling of representative genes in a dicot (Arabidopsis) and a monocot (rice) during reproduction and abiotic stress.</title>
        <authorList>
            <person name="Mathur S."/>
            <person name="Vyas S."/>
            <person name="Kapoor S."/>
            <person name="Tyagi A.K."/>
        </authorList>
    </citation>
    <scope>IDENTIFICATION</scope>
    <scope>NOMENCLATURE</scope>
</reference>
<sequence>MDQSQRTVAATPSSSRSYQFHPARAAIIDLFNLYLGRGSRQKPDESLRDPPNKSQKRVHAPNRDLPPRNEQFLLDFELLQSQFNDPEQLRTITESVLISLVVQCSNHAPRAEFLLFALRTLCRISYINWDTFLPSLLSSVSAAEASLSQGVQAAAATAGSSATSSQSVVPVSVNPTSLLPSAHGIGSPSASEVKSVENGQQIARAGQIVRENAMRNSQRIRAAAVNSLRQLSCKIILIGVESSLKPVTHAEIFQYMMNWLVNWDRRDLGTEDSVGKSWRSEKTLAEWLRSCLDVIWLLVEEGESRIPFYELLRSGLQFIENIPDDEALFTLIMEIHRRRDAMAMHMLMLDQHLHCPSFGTHRIVSQITANVPPEAVPHLRHSPITYPSVLGEPLYGEDLAMSIPKGSLDWERAVRCIRHAIRTTPSPDWWKRVLVVAPCYRPSTQAGPIPGAVFTSDMICEAIIDRIVELLKLTNSGNDCFGIDLVSVTFPPLYADANCWQEWLVFSDIFFFLIKSGCTDFVDFIDKLVLRLNGVDNHILRTNHVTWLLAQIIRVELVMTALNSDAKKVETTRKILSFHREDRNSDPNNPQSVLLDFVSSCQNLRIWSLSTTTRAYLNNEQLLKGKQIDEWWRSKGERMMDYMNMDDRSIGMFWVVSYTMAQPACETVINWLSSAGMAELPGLQPNDRVMMTQEVTPLPMSLLSGFSMNLCLKLALQMEEALFVSQVVPSIAMVETYTRLLLISPHSMFRSHFSQLAQRNASLLSKPGVTLLVLEILNYRLLPLYRYQGKSKTLMYDVTKIISALKGKRGDHRIFRLAENLCMNLILSLRDFFSVKREGKGPTEFTETLNRITIMTLAITIKTRGIADPDHMVYLQTMLEQILATSQHTWSEKTMRHFPSLLRETLKGRVDKRGLSIQAWQQAETTVINQCTQLLSPSAEPAYVSTYLSHSFPQHRQYLCAGACLLMQGHAENINSTNLARVLREVSPEEVTANIYTLVDVLLHHVHVDLQQGQSLEAVLDKAGANLAFFFWTHEMLPLDIFLLALIDRDDDPHALIIAMSLLKTPDLLLRIKNYCQNRGSPEHWLVTQVFKRNELQKALGNHLSWKDRYPTFFDDIAARLLPVIPLVLYRLIENNAMEQADNLLLAHSHFLAYHPLRFTFVRDILAYFYGHLPGKLVLRMLKVLDLSKIPFSESFPQYISPTGAPVCPPLDYFASLLLNLVNNVIPPLSSSSNCSSRSGSMADILNSSARPPHGKTPGTSQPGPANASEGQKAFYQIQDPGTYTQLVLETAVIEILSLPVSAAQIVSSLVQIIVNIQSTLIQSGNGFHGAANGVGQGSVLPTSPSGGSTDSMSASRSTCLIPGINTASFVSRSGYTCQQLSCLLIQACGLLLAQLPPDFHVQLYLEAARVTRETWWLKDGKRSQGELDSAVGYALMDPTWAAQDNTSTAIGNIVALLHAFFSNLPQEWLDGTNAIITNLRPVTSVAMLRVVFRIMGPLLPRLASTHTLFNKTLMLLLSALVDVFGKTAQTTAPVEASQIADLIDFLHHIIHYEGQGGAVQTSSKPRPDILALIGRAAETLRPDVQHLLAHLKTNPNSSIYAAAHQQNTAKTNTS</sequence>
<accession>F4I4P3</accession>
<accession>F4I4P4</accession>
<accession>O49295</accession>
<accession>Q9LR38</accession>
<protein>
    <recommendedName>
        <fullName>Mediator of RNA polymerase II transcription subunit 23</fullName>
    </recommendedName>
</protein>
<name>MED23_ARATH</name>
<proteinExistence type="evidence at protein level"/>
<comment type="function">
    <text evidence="1">Component of the Mediator complex, a coactivator involved in the regulated transcription of nearly all RNA polymerase II-dependent genes. Mediator functions as a bridge to convey information from gene-specific regulatory proteins to the basal RNA polymerase II transcription machinery. The Mediator complex, having a compact conformation in its free form, is recruited to promoters by direct interactions with regulatory proteins and serves for the assembly of a functional preinitiation complex with RNA polymerase II and the general transcription factors (By similarity).</text>
</comment>
<comment type="subunit">
    <text evidence="3">Component of the Mediator complex.</text>
</comment>
<comment type="subcellular location">
    <subcellularLocation>
        <location evidence="4">Nucleus</location>
    </subcellularLocation>
</comment>
<comment type="alternative products">
    <event type="alternative splicing"/>
    <isoform>
        <id>F4I4P3-1</id>
        <name>1</name>
        <sequence type="displayed"/>
    </isoform>
    <isoform>
        <id>F4I4P3-2</id>
        <name>2</name>
        <sequence type="described" ref="VSP_043991 VSP_043992"/>
    </isoform>
</comment>
<comment type="similarity">
    <text evidence="4">Belongs to the Mediator complex subunit 23 family.</text>
</comment>
<comment type="sequence caution" evidence="4">
    <conflict type="erroneous gene model prediction">
        <sequence resource="EMBL-CDS" id="AAC00603"/>
    </conflict>
</comment>
<comment type="sequence caution" evidence="4">
    <conflict type="erroneous gene model prediction">
        <sequence resource="EMBL-CDS" id="AAF86997"/>
    </conflict>
</comment>
<organism>
    <name type="scientific">Arabidopsis thaliana</name>
    <name type="common">Mouse-ear cress</name>
    <dbReference type="NCBI Taxonomy" id="3702"/>
    <lineage>
        <taxon>Eukaryota</taxon>
        <taxon>Viridiplantae</taxon>
        <taxon>Streptophyta</taxon>
        <taxon>Embryophyta</taxon>
        <taxon>Tracheophyta</taxon>
        <taxon>Spermatophyta</taxon>
        <taxon>Magnoliopsida</taxon>
        <taxon>eudicotyledons</taxon>
        <taxon>Gunneridae</taxon>
        <taxon>Pentapetalae</taxon>
        <taxon>rosids</taxon>
        <taxon>malvids</taxon>
        <taxon>Brassicales</taxon>
        <taxon>Brassicaceae</taxon>
        <taxon>Camelineae</taxon>
        <taxon>Arabidopsis</taxon>
    </lineage>
</organism>